<name>RR18_STAPU</name>
<evidence type="ECO:0000255" key="1">
    <source>
        <dbReference type="HAMAP-Rule" id="MF_00270"/>
    </source>
</evidence>
<evidence type="ECO:0000256" key="2">
    <source>
        <dbReference type="SAM" id="MobiDB-lite"/>
    </source>
</evidence>
<evidence type="ECO:0000305" key="3"/>
<protein>
    <recommendedName>
        <fullName evidence="1">Small ribosomal subunit protein bS18c</fullName>
    </recommendedName>
    <alternativeName>
        <fullName evidence="3">30S ribosomal protein S18, chloroplastic</fullName>
    </alternativeName>
</protein>
<organism>
    <name type="scientific">Staurastrum punctulatum</name>
    <name type="common">Green alga</name>
    <name type="synonym">Cosmoastrum punctulatum</name>
    <dbReference type="NCBI Taxonomy" id="102822"/>
    <lineage>
        <taxon>Eukaryota</taxon>
        <taxon>Viridiplantae</taxon>
        <taxon>Streptophyta</taxon>
        <taxon>Zygnematophyceae</taxon>
        <taxon>Zygnematophycidae</taxon>
        <taxon>Desmidiales</taxon>
        <taxon>Desmidiaceae</taxon>
        <taxon>Staurastrum</taxon>
    </lineage>
</organism>
<proteinExistence type="inferred from homology"/>
<accession>Q32RT7</accession>
<keyword id="KW-0150">Chloroplast</keyword>
<keyword id="KW-0934">Plastid</keyword>
<keyword id="KW-0687">Ribonucleoprotein</keyword>
<keyword id="KW-0689">Ribosomal protein</keyword>
<keyword id="KW-0694">RNA-binding</keyword>
<keyword id="KW-0699">rRNA-binding</keyword>
<dbReference type="EMBL" id="AY958085">
    <property type="protein sequence ID" value="AAX45755.1"/>
    <property type="molecule type" value="Genomic_DNA"/>
</dbReference>
<dbReference type="RefSeq" id="YP_636439.1">
    <property type="nucleotide sequence ID" value="NC_008116.1"/>
</dbReference>
<dbReference type="SMR" id="Q32RT7"/>
<dbReference type="GeneID" id="4108629"/>
<dbReference type="GO" id="GO:0009507">
    <property type="term" value="C:chloroplast"/>
    <property type="evidence" value="ECO:0007669"/>
    <property type="project" value="UniProtKB-SubCell"/>
</dbReference>
<dbReference type="GO" id="GO:0005763">
    <property type="term" value="C:mitochondrial small ribosomal subunit"/>
    <property type="evidence" value="ECO:0007669"/>
    <property type="project" value="TreeGrafter"/>
</dbReference>
<dbReference type="GO" id="GO:0070181">
    <property type="term" value="F:small ribosomal subunit rRNA binding"/>
    <property type="evidence" value="ECO:0007669"/>
    <property type="project" value="TreeGrafter"/>
</dbReference>
<dbReference type="GO" id="GO:0003735">
    <property type="term" value="F:structural constituent of ribosome"/>
    <property type="evidence" value="ECO:0007669"/>
    <property type="project" value="InterPro"/>
</dbReference>
<dbReference type="GO" id="GO:0006412">
    <property type="term" value="P:translation"/>
    <property type="evidence" value="ECO:0007669"/>
    <property type="project" value="UniProtKB-UniRule"/>
</dbReference>
<dbReference type="FunFam" id="4.10.640.10:FF:000002">
    <property type="entry name" value="30S ribosomal protein S18, chloroplastic"/>
    <property type="match status" value="1"/>
</dbReference>
<dbReference type="Gene3D" id="4.10.640.10">
    <property type="entry name" value="Ribosomal protein S18"/>
    <property type="match status" value="1"/>
</dbReference>
<dbReference type="HAMAP" id="MF_00270">
    <property type="entry name" value="Ribosomal_bS18"/>
    <property type="match status" value="1"/>
</dbReference>
<dbReference type="InterPro" id="IPR001648">
    <property type="entry name" value="Ribosomal_bS18"/>
</dbReference>
<dbReference type="InterPro" id="IPR018275">
    <property type="entry name" value="Ribosomal_bS18_CS"/>
</dbReference>
<dbReference type="InterPro" id="IPR036870">
    <property type="entry name" value="Ribosomal_bS18_sf"/>
</dbReference>
<dbReference type="NCBIfam" id="TIGR00165">
    <property type="entry name" value="S18"/>
    <property type="match status" value="1"/>
</dbReference>
<dbReference type="PANTHER" id="PTHR13479">
    <property type="entry name" value="30S RIBOSOMAL PROTEIN S18"/>
    <property type="match status" value="1"/>
</dbReference>
<dbReference type="PANTHER" id="PTHR13479:SF40">
    <property type="entry name" value="SMALL RIBOSOMAL SUBUNIT PROTEIN BS18M"/>
    <property type="match status" value="1"/>
</dbReference>
<dbReference type="Pfam" id="PF01084">
    <property type="entry name" value="Ribosomal_S18"/>
    <property type="match status" value="1"/>
</dbReference>
<dbReference type="PRINTS" id="PR00974">
    <property type="entry name" value="RIBOSOMALS18"/>
</dbReference>
<dbReference type="SUPFAM" id="SSF46911">
    <property type="entry name" value="Ribosomal protein S18"/>
    <property type="match status" value="1"/>
</dbReference>
<dbReference type="PROSITE" id="PS00057">
    <property type="entry name" value="RIBOSOMAL_S18"/>
    <property type="match status" value="1"/>
</dbReference>
<geneLocation type="chloroplast"/>
<reference key="1">
    <citation type="journal article" date="2005" name="BMC Biol.">
        <title>The complete chloroplast DNA sequences of the charophycean green algae Staurastrum and Zygnema reveal that the chloroplast genome underwent extensive changes during the evolution of the Zygnematales.</title>
        <authorList>
            <person name="Turmel M."/>
            <person name="Otis C."/>
            <person name="Lemieux C."/>
        </authorList>
    </citation>
    <scope>NUCLEOTIDE SEQUENCE [LARGE SCALE GENOMIC DNA]</scope>
</reference>
<sequence>MKKFISRPKRSSRRRKKTPIKPGENIDYKNVGLLRKFISEQGKILSKRITRLTSKQQRAMTKAIKSARILALLPFINNEN</sequence>
<comment type="subunit">
    <text>Part of the 30S ribosomal subunit.</text>
</comment>
<comment type="subcellular location">
    <subcellularLocation>
        <location>Plastid</location>
        <location>Chloroplast</location>
    </subcellularLocation>
</comment>
<comment type="similarity">
    <text evidence="1">Belongs to the bacterial ribosomal protein bS18 family.</text>
</comment>
<feature type="chain" id="PRO_0000276891" description="Small ribosomal subunit protein bS18c">
    <location>
        <begin position="1"/>
        <end position="80"/>
    </location>
</feature>
<feature type="region of interest" description="Disordered" evidence="2">
    <location>
        <begin position="1"/>
        <end position="24"/>
    </location>
</feature>
<feature type="compositionally biased region" description="Basic residues" evidence="2">
    <location>
        <begin position="1"/>
        <end position="19"/>
    </location>
</feature>
<gene>
    <name evidence="1" type="primary">rps18</name>
</gene>